<keyword id="KW-0963">Cytoplasm</keyword>
<keyword id="KW-0274">FAD</keyword>
<keyword id="KW-0285">Flavoprotein</keyword>
<keyword id="KW-0489">Methyltransferase</keyword>
<keyword id="KW-0520">NAD</keyword>
<keyword id="KW-0521">NADP</keyword>
<keyword id="KW-0808">Transferase</keyword>
<keyword id="KW-0819">tRNA processing</keyword>
<evidence type="ECO:0000255" key="1">
    <source>
        <dbReference type="HAMAP-Rule" id="MF_01037"/>
    </source>
</evidence>
<reference key="1">
    <citation type="journal article" date="2006" name="Genome Biol.">
        <title>The genome of Rhizobium leguminosarum has recognizable core and accessory components.</title>
        <authorList>
            <person name="Young J.P.W."/>
            <person name="Crossman L.C."/>
            <person name="Johnston A.W.B."/>
            <person name="Thomson N.R."/>
            <person name="Ghazoui Z.F."/>
            <person name="Hull K.H."/>
            <person name="Wexler M."/>
            <person name="Curson A.R.J."/>
            <person name="Todd J.D."/>
            <person name="Poole P.S."/>
            <person name="Mauchline T.H."/>
            <person name="East A.K."/>
            <person name="Quail M.A."/>
            <person name="Churcher C."/>
            <person name="Arrowsmith C."/>
            <person name="Cherevach I."/>
            <person name="Chillingworth T."/>
            <person name="Clarke K."/>
            <person name="Cronin A."/>
            <person name="Davis P."/>
            <person name="Fraser A."/>
            <person name="Hance Z."/>
            <person name="Hauser H."/>
            <person name="Jagels K."/>
            <person name="Moule S."/>
            <person name="Mungall K."/>
            <person name="Norbertczak H."/>
            <person name="Rabbinowitsch E."/>
            <person name="Sanders M."/>
            <person name="Simmonds M."/>
            <person name="Whitehead S."/>
            <person name="Parkhill J."/>
        </authorList>
    </citation>
    <scope>NUCLEOTIDE SEQUENCE [LARGE SCALE GENOMIC DNA]</scope>
    <source>
        <strain>DSM 114642 / LMG 32736 / 3841</strain>
    </source>
</reference>
<name>TRMFO_RHIJ3</name>
<proteinExistence type="inferred from homology"/>
<feature type="chain" id="PRO_0000346386" description="Methylenetetrahydrofolate--tRNA-(uracil-5-)-methyltransferase TrmFO">
    <location>
        <begin position="1"/>
        <end position="477"/>
    </location>
</feature>
<feature type="binding site" evidence="1">
    <location>
        <begin position="14"/>
        <end position="19"/>
    </location>
    <ligand>
        <name>FAD</name>
        <dbReference type="ChEBI" id="CHEBI:57692"/>
    </ligand>
</feature>
<accession>Q1MHL2</accession>
<protein>
    <recommendedName>
        <fullName evidence="1">Methylenetetrahydrofolate--tRNA-(uracil-5-)-methyltransferase TrmFO</fullName>
        <ecNumber evidence="1">2.1.1.74</ecNumber>
    </recommendedName>
    <alternativeName>
        <fullName evidence="1">Folate-dependent tRNA (uracil-5-)-methyltransferase</fullName>
    </alternativeName>
    <alternativeName>
        <fullName evidence="1">Folate-dependent tRNA(M-5-U54)-methyltransferase</fullName>
    </alternativeName>
</protein>
<organism>
    <name type="scientific">Rhizobium johnstonii (strain DSM 114642 / LMG 32736 / 3841)</name>
    <name type="common">Rhizobium leguminosarum bv. viciae</name>
    <dbReference type="NCBI Taxonomy" id="216596"/>
    <lineage>
        <taxon>Bacteria</taxon>
        <taxon>Pseudomonadati</taxon>
        <taxon>Pseudomonadota</taxon>
        <taxon>Alphaproteobacteria</taxon>
        <taxon>Hyphomicrobiales</taxon>
        <taxon>Rhizobiaceae</taxon>
        <taxon>Rhizobium/Agrobacterium group</taxon>
        <taxon>Rhizobium</taxon>
        <taxon>Rhizobium johnstonii</taxon>
    </lineage>
</organism>
<gene>
    <name evidence="1" type="primary">trmFO</name>
    <name type="ordered locus">RL2059</name>
</gene>
<comment type="function">
    <text evidence="1">Catalyzes the folate-dependent formation of 5-methyl-uridine at position 54 (M-5-U54) in all tRNAs.</text>
</comment>
<comment type="catalytic activity">
    <reaction evidence="1">
        <text>uridine(54) in tRNA + (6R)-5,10-methylene-5,6,7,8-tetrahydrofolate + NADH + H(+) = 5-methyluridine(54) in tRNA + (6S)-5,6,7,8-tetrahydrofolate + NAD(+)</text>
        <dbReference type="Rhea" id="RHEA:16873"/>
        <dbReference type="Rhea" id="RHEA-COMP:10167"/>
        <dbReference type="Rhea" id="RHEA-COMP:10193"/>
        <dbReference type="ChEBI" id="CHEBI:15378"/>
        <dbReference type="ChEBI" id="CHEBI:15636"/>
        <dbReference type="ChEBI" id="CHEBI:57453"/>
        <dbReference type="ChEBI" id="CHEBI:57540"/>
        <dbReference type="ChEBI" id="CHEBI:57945"/>
        <dbReference type="ChEBI" id="CHEBI:65315"/>
        <dbReference type="ChEBI" id="CHEBI:74447"/>
        <dbReference type="EC" id="2.1.1.74"/>
    </reaction>
</comment>
<comment type="catalytic activity">
    <reaction evidence="1">
        <text>uridine(54) in tRNA + (6R)-5,10-methylene-5,6,7,8-tetrahydrofolate + NADPH + H(+) = 5-methyluridine(54) in tRNA + (6S)-5,6,7,8-tetrahydrofolate + NADP(+)</text>
        <dbReference type="Rhea" id="RHEA:62372"/>
        <dbReference type="Rhea" id="RHEA-COMP:10167"/>
        <dbReference type="Rhea" id="RHEA-COMP:10193"/>
        <dbReference type="ChEBI" id="CHEBI:15378"/>
        <dbReference type="ChEBI" id="CHEBI:15636"/>
        <dbReference type="ChEBI" id="CHEBI:57453"/>
        <dbReference type="ChEBI" id="CHEBI:57783"/>
        <dbReference type="ChEBI" id="CHEBI:58349"/>
        <dbReference type="ChEBI" id="CHEBI:65315"/>
        <dbReference type="ChEBI" id="CHEBI:74447"/>
        <dbReference type="EC" id="2.1.1.74"/>
    </reaction>
</comment>
<comment type="cofactor">
    <cofactor evidence="1">
        <name>FAD</name>
        <dbReference type="ChEBI" id="CHEBI:57692"/>
    </cofactor>
</comment>
<comment type="subcellular location">
    <subcellularLocation>
        <location evidence="1">Cytoplasm</location>
    </subcellularLocation>
</comment>
<comment type="similarity">
    <text evidence="1">Belongs to the MnmG family. TrmFO subfamily.</text>
</comment>
<sequence>MNTISSHSPIHVVGGGLAGSEAAWQIASSGVPVILHEMRGVRGTDAHKTDGLAELVCSNSFRSDDATSNAVGVIHAEMRMAGSLIMAAADRCQVPAGGALAVDRDGFSEAVTKAVHDHPLITVVREEVTGLPPRDWDLAIVATGPLTAPSLASAIQTETGEDSLAFFDAIAPIVYRESIDMDICWYQSRYDKVGPGGTGKDYINCPMDEAQYNAFVDALILGDTVGFKEWEGTPYFDGCLPIEVMAERGRETLRHGPMKPMGLTNAHNPTVKAYAVVQLRQDNALGTLYNMVGFQTKLKYGAQADIFRMIPGLENAEFARLGGLHRNTYINSPTLLDPSLTLKSRPGLRFAGQITGCEGYVESASVGLMAGRFAAAERKGEAISLPPATTALGSLLGHITGGHLVTDEEPGKRSFQPMNINFGLFPELQPGSIVKPEGVKRFRGKDKTIMKRQLIARRALADCATWLGQESTLAESA</sequence>
<dbReference type="EC" id="2.1.1.74" evidence="1"/>
<dbReference type="EMBL" id="AM236080">
    <property type="protein sequence ID" value="CAK07551.1"/>
    <property type="molecule type" value="Genomic_DNA"/>
</dbReference>
<dbReference type="RefSeq" id="WP_011651667.1">
    <property type="nucleotide sequence ID" value="NC_008380.1"/>
</dbReference>
<dbReference type="SMR" id="Q1MHL2"/>
<dbReference type="EnsemblBacteria" id="CAK07551">
    <property type="protein sequence ID" value="CAK07551"/>
    <property type="gene ID" value="RL2059"/>
</dbReference>
<dbReference type="KEGG" id="rle:RL2059"/>
<dbReference type="eggNOG" id="COG1206">
    <property type="taxonomic scope" value="Bacteria"/>
</dbReference>
<dbReference type="HOGENOM" id="CLU_033057_1_0_5"/>
<dbReference type="Proteomes" id="UP000006575">
    <property type="component" value="Chromosome"/>
</dbReference>
<dbReference type="GO" id="GO:0005829">
    <property type="term" value="C:cytosol"/>
    <property type="evidence" value="ECO:0007669"/>
    <property type="project" value="TreeGrafter"/>
</dbReference>
<dbReference type="GO" id="GO:0050660">
    <property type="term" value="F:flavin adenine dinucleotide binding"/>
    <property type="evidence" value="ECO:0007669"/>
    <property type="project" value="UniProtKB-UniRule"/>
</dbReference>
<dbReference type="GO" id="GO:0047151">
    <property type="term" value="F:tRNA (uracil(54)-C5)-methyltransferase activity, 5,10-methylenetetrahydrofolate-dependent"/>
    <property type="evidence" value="ECO:0007669"/>
    <property type="project" value="UniProtKB-UniRule"/>
</dbReference>
<dbReference type="GO" id="GO:0030488">
    <property type="term" value="P:tRNA methylation"/>
    <property type="evidence" value="ECO:0007669"/>
    <property type="project" value="TreeGrafter"/>
</dbReference>
<dbReference type="GO" id="GO:0002098">
    <property type="term" value="P:tRNA wobble uridine modification"/>
    <property type="evidence" value="ECO:0007669"/>
    <property type="project" value="TreeGrafter"/>
</dbReference>
<dbReference type="Gene3D" id="3.50.50.60">
    <property type="entry name" value="FAD/NAD(P)-binding domain"/>
    <property type="match status" value="2"/>
</dbReference>
<dbReference type="HAMAP" id="MF_01037">
    <property type="entry name" value="TrmFO"/>
    <property type="match status" value="1"/>
</dbReference>
<dbReference type="InterPro" id="IPR036188">
    <property type="entry name" value="FAD/NAD-bd_sf"/>
</dbReference>
<dbReference type="InterPro" id="IPR002218">
    <property type="entry name" value="MnmG-rel"/>
</dbReference>
<dbReference type="InterPro" id="IPR020595">
    <property type="entry name" value="MnmG-rel_CS"/>
</dbReference>
<dbReference type="InterPro" id="IPR040131">
    <property type="entry name" value="MnmG_N"/>
</dbReference>
<dbReference type="InterPro" id="IPR004417">
    <property type="entry name" value="TrmFO"/>
</dbReference>
<dbReference type="NCBIfam" id="TIGR00137">
    <property type="entry name" value="gid_trmFO"/>
    <property type="match status" value="1"/>
</dbReference>
<dbReference type="NCBIfam" id="NF003739">
    <property type="entry name" value="PRK05335.1"/>
    <property type="match status" value="1"/>
</dbReference>
<dbReference type="PANTHER" id="PTHR11806">
    <property type="entry name" value="GLUCOSE INHIBITED DIVISION PROTEIN A"/>
    <property type="match status" value="1"/>
</dbReference>
<dbReference type="PANTHER" id="PTHR11806:SF2">
    <property type="entry name" value="METHYLENETETRAHYDROFOLATE--TRNA-(URACIL-5-)-METHYLTRANSFERASE TRMFO"/>
    <property type="match status" value="1"/>
</dbReference>
<dbReference type="Pfam" id="PF01134">
    <property type="entry name" value="GIDA"/>
    <property type="match status" value="1"/>
</dbReference>
<dbReference type="SUPFAM" id="SSF51905">
    <property type="entry name" value="FAD/NAD(P)-binding domain"/>
    <property type="match status" value="1"/>
</dbReference>
<dbReference type="PROSITE" id="PS01281">
    <property type="entry name" value="GIDA_2"/>
    <property type="match status" value="1"/>
</dbReference>